<accession>Q470E0</accession>
<sequence length="186" mass="20835">MSVAETKKSVEQKMQKSIEAFKADLAKVRTGRAHVGLLDHVQVDYYGSMVPISQVANIGLGDARTITVQPWEKKMVGAVEKAIRDCDLGLNPATMGEVIRVPMPPLTEERRKELTKVVKGEAEGAKIAVRNLRRDANEQFKKLVKDKAISEDDERRGQDDVQKLTDKYVAEIDKMVAEKEKEIMTV</sequence>
<comment type="function">
    <text evidence="1">Responsible for the release of ribosomes from messenger RNA at the termination of protein biosynthesis. May increase the efficiency of translation by recycling ribosomes from one round of translation to another.</text>
</comment>
<comment type="subcellular location">
    <subcellularLocation>
        <location evidence="1">Cytoplasm</location>
    </subcellularLocation>
</comment>
<comment type="similarity">
    <text evidence="1">Belongs to the RRF family.</text>
</comment>
<gene>
    <name evidence="1" type="primary">frr</name>
    <name type="ordered locus">Reut_A1878</name>
</gene>
<reference key="1">
    <citation type="journal article" date="2010" name="PLoS ONE">
        <title>The complete multipartite genome sequence of Cupriavidus necator JMP134, a versatile pollutant degrader.</title>
        <authorList>
            <person name="Lykidis A."/>
            <person name="Perez-Pantoja D."/>
            <person name="Ledger T."/>
            <person name="Mavromatis K."/>
            <person name="Anderson I.J."/>
            <person name="Ivanova N.N."/>
            <person name="Hooper S.D."/>
            <person name="Lapidus A."/>
            <person name="Lucas S."/>
            <person name="Gonzalez B."/>
            <person name="Kyrpides N.C."/>
        </authorList>
    </citation>
    <scope>NUCLEOTIDE SEQUENCE [LARGE SCALE GENOMIC DNA]</scope>
    <source>
        <strain>JMP134 / LMG 1197</strain>
    </source>
</reference>
<proteinExistence type="inferred from homology"/>
<keyword id="KW-0963">Cytoplasm</keyword>
<keyword id="KW-0648">Protein biosynthesis</keyword>
<name>RRF_CUPPJ</name>
<dbReference type="EMBL" id="CP000090">
    <property type="protein sequence ID" value="AAZ61243.1"/>
    <property type="molecule type" value="Genomic_DNA"/>
</dbReference>
<dbReference type="SMR" id="Q470E0"/>
<dbReference type="STRING" id="264198.Reut_A1878"/>
<dbReference type="KEGG" id="reu:Reut_A1878"/>
<dbReference type="eggNOG" id="COG0233">
    <property type="taxonomic scope" value="Bacteria"/>
</dbReference>
<dbReference type="HOGENOM" id="CLU_073981_2_0_4"/>
<dbReference type="OrthoDB" id="9804006at2"/>
<dbReference type="GO" id="GO:0005829">
    <property type="term" value="C:cytosol"/>
    <property type="evidence" value="ECO:0007669"/>
    <property type="project" value="GOC"/>
</dbReference>
<dbReference type="GO" id="GO:0043023">
    <property type="term" value="F:ribosomal large subunit binding"/>
    <property type="evidence" value="ECO:0007669"/>
    <property type="project" value="TreeGrafter"/>
</dbReference>
<dbReference type="GO" id="GO:0002184">
    <property type="term" value="P:cytoplasmic translational termination"/>
    <property type="evidence" value="ECO:0007669"/>
    <property type="project" value="TreeGrafter"/>
</dbReference>
<dbReference type="CDD" id="cd00520">
    <property type="entry name" value="RRF"/>
    <property type="match status" value="1"/>
</dbReference>
<dbReference type="FunFam" id="1.10.132.20:FF:000001">
    <property type="entry name" value="Ribosome-recycling factor"/>
    <property type="match status" value="1"/>
</dbReference>
<dbReference type="FunFam" id="3.30.1360.40:FF:000001">
    <property type="entry name" value="Ribosome-recycling factor"/>
    <property type="match status" value="1"/>
</dbReference>
<dbReference type="Gene3D" id="3.30.1360.40">
    <property type="match status" value="1"/>
</dbReference>
<dbReference type="Gene3D" id="1.10.132.20">
    <property type="entry name" value="Ribosome-recycling factor"/>
    <property type="match status" value="1"/>
</dbReference>
<dbReference type="HAMAP" id="MF_00040">
    <property type="entry name" value="RRF"/>
    <property type="match status" value="1"/>
</dbReference>
<dbReference type="InterPro" id="IPR002661">
    <property type="entry name" value="Ribosome_recyc_fac"/>
</dbReference>
<dbReference type="InterPro" id="IPR023584">
    <property type="entry name" value="Ribosome_recyc_fac_dom"/>
</dbReference>
<dbReference type="InterPro" id="IPR036191">
    <property type="entry name" value="RRF_sf"/>
</dbReference>
<dbReference type="NCBIfam" id="TIGR00496">
    <property type="entry name" value="frr"/>
    <property type="match status" value="1"/>
</dbReference>
<dbReference type="PANTHER" id="PTHR20982:SF3">
    <property type="entry name" value="MITOCHONDRIAL RIBOSOME RECYCLING FACTOR PSEUDO 1"/>
    <property type="match status" value="1"/>
</dbReference>
<dbReference type="PANTHER" id="PTHR20982">
    <property type="entry name" value="RIBOSOME RECYCLING FACTOR"/>
    <property type="match status" value="1"/>
</dbReference>
<dbReference type="Pfam" id="PF01765">
    <property type="entry name" value="RRF"/>
    <property type="match status" value="1"/>
</dbReference>
<dbReference type="SUPFAM" id="SSF55194">
    <property type="entry name" value="Ribosome recycling factor, RRF"/>
    <property type="match status" value="1"/>
</dbReference>
<feature type="chain" id="PRO_1000003241" description="Ribosome-recycling factor">
    <location>
        <begin position="1"/>
        <end position="186"/>
    </location>
</feature>
<evidence type="ECO:0000255" key="1">
    <source>
        <dbReference type="HAMAP-Rule" id="MF_00040"/>
    </source>
</evidence>
<organism>
    <name type="scientific">Cupriavidus pinatubonensis (strain JMP 134 / LMG 1197)</name>
    <name type="common">Cupriavidus necator (strain JMP 134)</name>
    <dbReference type="NCBI Taxonomy" id="264198"/>
    <lineage>
        <taxon>Bacteria</taxon>
        <taxon>Pseudomonadati</taxon>
        <taxon>Pseudomonadota</taxon>
        <taxon>Betaproteobacteria</taxon>
        <taxon>Burkholderiales</taxon>
        <taxon>Burkholderiaceae</taxon>
        <taxon>Cupriavidus</taxon>
    </lineage>
</organism>
<protein>
    <recommendedName>
        <fullName evidence="1">Ribosome-recycling factor</fullName>
        <shortName evidence="1">RRF</shortName>
    </recommendedName>
    <alternativeName>
        <fullName evidence="1">Ribosome-releasing factor</fullName>
    </alternativeName>
</protein>